<accession>P0A9A5</accession>
<accession>P52091</accession>
<accession>P76306</accession>
<accession>P94744</accession>
<proteinExistence type="inferred from homology"/>
<evidence type="ECO:0000255" key="1">
    <source>
        <dbReference type="PROSITE-ProRule" id="PRU00085"/>
    </source>
</evidence>
<evidence type="ECO:0000305" key="2"/>
<feature type="chain" id="PRO_0000201092" description="Bacterial non-heme ferritin-like protein">
    <location>
        <begin position="1"/>
        <end position="167"/>
    </location>
</feature>
<feature type="domain" description="Ferritin-like diiron" evidence="1">
    <location>
        <begin position="1"/>
        <end position="145"/>
    </location>
</feature>
<gene>
    <name type="primary">ftnB</name>
    <name type="ordered locus">SF1948</name>
    <name type="ordered locus">S2041</name>
</gene>
<protein>
    <recommendedName>
        <fullName>Bacterial non-heme ferritin-like protein</fullName>
    </recommendedName>
</protein>
<sequence>MATAGMLLKLNSQMNREFYASNLYLHLSNWCSEQSLNGTATFLRAQAQSNVTQMMRMFNFMKSVGATPIVKAIDVPGEKLNSLEELFQKTMEEYEQRSSTLAQLADEAKELNDDSTVNFLRDLEKEQQHDGLLLQTILDEVRSAKLAGMCPVQTDQHVLNVVSHQLH</sequence>
<reference key="1">
    <citation type="journal article" date="2002" name="Nucleic Acids Res.">
        <title>Genome sequence of Shigella flexneri 2a: insights into pathogenicity through comparison with genomes of Escherichia coli K12 and O157.</title>
        <authorList>
            <person name="Jin Q."/>
            <person name="Yuan Z."/>
            <person name="Xu J."/>
            <person name="Wang Y."/>
            <person name="Shen Y."/>
            <person name="Lu W."/>
            <person name="Wang J."/>
            <person name="Liu H."/>
            <person name="Yang J."/>
            <person name="Yang F."/>
            <person name="Zhang X."/>
            <person name="Zhang J."/>
            <person name="Yang G."/>
            <person name="Wu H."/>
            <person name="Qu D."/>
            <person name="Dong J."/>
            <person name="Sun L."/>
            <person name="Xue Y."/>
            <person name="Zhao A."/>
            <person name="Gao Y."/>
            <person name="Zhu J."/>
            <person name="Kan B."/>
            <person name="Ding K."/>
            <person name="Chen S."/>
            <person name="Cheng H."/>
            <person name="Yao Z."/>
            <person name="He B."/>
            <person name="Chen R."/>
            <person name="Ma D."/>
            <person name="Qiang B."/>
            <person name="Wen Y."/>
            <person name="Hou Y."/>
            <person name="Yu J."/>
        </authorList>
    </citation>
    <scope>NUCLEOTIDE SEQUENCE [LARGE SCALE GENOMIC DNA]</scope>
    <source>
        <strain>301 / Serotype 2a</strain>
    </source>
</reference>
<reference key="2">
    <citation type="journal article" date="2003" name="Infect. Immun.">
        <title>Complete genome sequence and comparative genomics of Shigella flexneri serotype 2a strain 2457T.</title>
        <authorList>
            <person name="Wei J."/>
            <person name="Goldberg M.B."/>
            <person name="Burland V."/>
            <person name="Venkatesan M.M."/>
            <person name="Deng W."/>
            <person name="Fournier G."/>
            <person name="Mayhew G.F."/>
            <person name="Plunkett G. III"/>
            <person name="Rose D.J."/>
            <person name="Darling A."/>
            <person name="Mau B."/>
            <person name="Perna N.T."/>
            <person name="Payne S.M."/>
            <person name="Runyen-Janecky L.J."/>
            <person name="Zhou S."/>
            <person name="Schwartz D.C."/>
            <person name="Blattner F.R."/>
        </authorList>
    </citation>
    <scope>NUCLEOTIDE SEQUENCE [LARGE SCALE GENOMIC DNA]</scope>
    <source>
        <strain>ATCC 700930 / 2457T / Serotype 2a</strain>
    </source>
</reference>
<name>FTNB_SHIFL</name>
<comment type="subcellular location">
    <subcellularLocation>
        <location evidence="2">Cytoplasm</location>
    </subcellularLocation>
</comment>
<comment type="similarity">
    <text evidence="2">Belongs to the ferritin family. Prokaryotic subfamily.</text>
</comment>
<organism>
    <name type="scientific">Shigella flexneri</name>
    <dbReference type="NCBI Taxonomy" id="623"/>
    <lineage>
        <taxon>Bacteria</taxon>
        <taxon>Pseudomonadati</taxon>
        <taxon>Pseudomonadota</taxon>
        <taxon>Gammaproteobacteria</taxon>
        <taxon>Enterobacterales</taxon>
        <taxon>Enterobacteriaceae</taxon>
        <taxon>Shigella</taxon>
    </lineage>
</organism>
<keyword id="KW-0963">Cytoplasm</keyword>
<keyword id="KW-1185">Reference proteome</keyword>
<dbReference type="EMBL" id="AE005674">
    <property type="protein sequence ID" value="AAN43499.1"/>
    <property type="molecule type" value="Genomic_DNA"/>
</dbReference>
<dbReference type="EMBL" id="AE014073">
    <property type="protein sequence ID" value="AAP17329.1"/>
    <property type="molecule type" value="Genomic_DNA"/>
</dbReference>
<dbReference type="RefSeq" id="WP_000179469.1">
    <property type="nucleotide sequence ID" value="NZ_WPGW01000033.1"/>
</dbReference>
<dbReference type="SMR" id="P0A9A5"/>
<dbReference type="STRING" id="198214.SF1948"/>
<dbReference type="PaxDb" id="198214-SF1948"/>
<dbReference type="KEGG" id="sfl:SF1948"/>
<dbReference type="KEGG" id="sfx:S2041"/>
<dbReference type="PATRIC" id="fig|198214.7.peg.2325"/>
<dbReference type="HOGENOM" id="CLU_065681_1_3_6"/>
<dbReference type="Proteomes" id="UP000001006">
    <property type="component" value="Chromosome"/>
</dbReference>
<dbReference type="Proteomes" id="UP000002673">
    <property type="component" value="Chromosome"/>
</dbReference>
<dbReference type="GO" id="GO:0005737">
    <property type="term" value="C:cytoplasm"/>
    <property type="evidence" value="ECO:0007669"/>
    <property type="project" value="UniProtKB-SubCell"/>
</dbReference>
<dbReference type="GO" id="GO:0008199">
    <property type="term" value="F:ferric iron binding"/>
    <property type="evidence" value="ECO:0007669"/>
    <property type="project" value="InterPro"/>
</dbReference>
<dbReference type="CDD" id="cd01055">
    <property type="entry name" value="Nonheme_Ferritin"/>
    <property type="match status" value="1"/>
</dbReference>
<dbReference type="FunFam" id="1.20.1260.10:FF:000004">
    <property type="entry name" value="Ferritin"/>
    <property type="match status" value="1"/>
</dbReference>
<dbReference type="Gene3D" id="1.20.1260.10">
    <property type="match status" value="1"/>
</dbReference>
<dbReference type="InterPro" id="IPR012347">
    <property type="entry name" value="Ferritin-like"/>
</dbReference>
<dbReference type="InterPro" id="IPR009040">
    <property type="entry name" value="Ferritin-like_diiron"/>
</dbReference>
<dbReference type="InterPro" id="IPR009078">
    <property type="entry name" value="Ferritin-like_SF"/>
</dbReference>
<dbReference type="InterPro" id="IPR008331">
    <property type="entry name" value="Ferritin_DPS_dom"/>
</dbReference>
<dbReference type="InterPro" id="IPR041719">
    <property type="entry name" value="Ferritin_prok"/>
</dbReference>
<dbReference type="NCBIfam" id="NF011597">
    <property type="entry name" value="PRK15022.1"/>
    <property type="match status" value="1"/>
</dbReference>
<dbReference type="Pfam" id="PF00210">
    <property type="entry name" value="Ferritin"/>
    <property type="match status" value="1"/>
</dbReference>
<dbReference type="SUPFAM" id="SSF47240">
    <property type="entry name" value="Ferritin-like"/>
    <property type="match status" value="1"/>
</dbReference>
<dbReference type="PROSITE" id="PS50905">
    <property type="entry name" value="FERRITIN_LIKE"/>
    <property type="match status" value="1"/>
</dbReference>